<organism>
    <name type="scientific">Syntrophomonas wolfei subsp. wolfei (strain DSM 2245B / Goettingen)</name>
    <dbReference type="NCBI Taxonomy" id="335541"/>
    <lineage>
        <taxon>Bacteria</taxon>
        <taxon>Bacillati</taxon>
        <taxon>Bacillota</taxon>
        <taxon>Clostridia</taxon>
        <taxon>Eubacteriales</taxon>
        <taxon>Syntrophomonadaceae</taxon>
        <taxon>Syntrophomonas</taxon>
    </lineage>
</organism>
<keyword id="KW-1185">Reference proteome</keyword>
<keyword id="KW-0687">Ribonucleoprotein</keyword>
<keyword id="KW-0689">Ribosomal protein</keyword>
<keyword id="KW-0694">RNA-binding</keyword>
<keyword id="KW-0699">rRNA-binding</keyword>
<feature type="chain" id="PRO_0000353617" description="Large ribosomal subunit protein uL3">
    <location>
        <begin position="1"/>
        <end position="212"/>
    </location>
</feature>
<feature type="region of interest" description="Disordered" evidence="2">
    <location>
        <begin position="133"/>
        <end position="152"/>
    </location>
</feature>
<gene>
    <name evidence="1" type="primary">rplC</name>
    <name type="ordered locus">Swol_2333</name>
</gene>
<reference key="1">
    <citation type="journal article" date="2010" name="Environ. Microbiol.">
        <title>The genome of Syntrophomonas wolfei: new insights into syntrophic metabolism and biohydrogen production.</title>
        <authorList>
            <person name="Sieber J.R."/>
            <person name="Sims D.R."/>
            <person name="Han C."/>
            <person name="Kim E."/>
            <person name="Lykidis A."/>
            <person name="Lapidus A.L."/>
            <person name="McDonnald E."/>
            <person name="Rohlin L."/>
            <person name="Culley D.E."/>
            <person name="Gunsalus R."/>
            <person name="McInerney M.J."/>
        </authorList>
    </citation>
    <scope>NUCLEOTIDE SEQUENCE [LARGE SCALE GENOMIC DNA]</scope>
    <source>
        <strain>DSM 2245B / Goettingen</strain>
    </source>
</reference>
<dbReference type="EMBL" id="CP000448">
    <property type="protein sequence ID" value="ABI69624.1"/>
    <property type="molecule type" value="Genomic_DNA"/>
</dbReference>
<dbReference type="SMR" id="Q0AUI0"/>
<dbReference type="STRING" id="335541.Swol_2333"/>
<dbReference type="KEGG" id="swo:Swol_2333"/>
<dbReference type="eggNOG" id="COG0087">
    <property type="taxonomic scope" value="Bacteria"/>
</dbReference>
<dbReference type="HOGENOM" id="CLU_044142_4_1_9"/>
<dbReference type="Proteomes" id="UP000001968">
    <property type="component" value="Chromosome"/>
</dbReference>
<dbReference type="GO" id="GO:0022625">
    <property type="term" value="C:cytosolic large ribosomal subunit"/>
    <property type="evidence" value="ECO:0007669"/>
    <property type="project" value="TreeGrafter"/>
</dbReference>
<dbReference type="GO" id="GO:0019843">
    <property type="term" value="F:rRNA binding"/>
    <property type="evidence" value="ECO:0007669"/>
    <property type="project" value="UniProtKB-UniRule"/>
</dbReference>
<dbReference type="GO" id="GO:0003735">
    <property type="term" value="F:structural constituent of ribosome"/>
    <property type="evidence" value="ECO:0007669"/>
    <property type="project" value="InterPro"/>
</dbReference>
<dbReference type="GO" id="GO:0006412">
    <property type="term" value="P:translation"/>
    <property type="evidence" value="ECO:0007669"/>
    <property type="project" value="UniProtKB-UniRule"/>
</dbReference>
<dbReference type="FunFam" id="2.40.30.10:FF:000004">
    <property type="entry name" value="50S ribosomal protein L3"/>
    <property type="match status" value="1"/>
</dbReference>
<dbReference type="FunFam" id="3.30.160.810:FF:000001">
    <property type="entry name" value="50S ribosomal protein L3"/>
    <property type="match status" value="1"/>
</dbReference>
<dbReference type="Gene3D" id="3.30.160.810">
    <property type="match status" value="1"/>
</dbReference>
<dbReference type="Gene3D" id="2.40.30.10">
    <property type="entry name" value="Translation factors"/>
    <property type="match status" value="1"/>
</dbReference>
<dbReference type="HAMAP" id="MF_01325_B">
    <property type="entry name" value="Ribosomal_uL3_B"/>
    <property type="match status" value="1"/>
</dbReference>
<dbReference type="InterPro" id="IPR000597">
    <property type="entry name" value="Ribosomal_uL3"/>
</dbReference>
<dbReference type="InterPro" id="IPR019927">
    <property type="entry name" value="Ribosomal_uL3_bac/org-type"/>
</dbReference>
<dbReference type="InterPro" id="IPR019926">
    <property type="entry name" value="Ribosomal_uL3_CS"/>
</dbReference>
<dbReference type="InterPro" id="IPR009000">
    <property type="entry name" value="Transl_B-barrel_sf"/>
</dbReference>
<dbReference type="NCBIfam" id="TIGR03625">
    <property type="entry name" value="L3_bact"/>
    <property type="match status" value="1"/>
</dbReference>
<dbReference type="PANTHER" id="PTHR11229">
    <property type="entry name" value="50S RIBOSOMAL PROTEIN L3"/>
    <property type="match status" value="1"/>
</dbReference>
<dbReference type="PANTHER" id="PTHR11229:SF16">
    <property type="entry name" value="LARGE RIBOSOMAL SUBUNIT PROTEIN UL3C"/>
    <property type="match status" value="1"/>
</dbReference>
<dbReference type="Pfam" id="PF00297">
    <property type="entry name" value="Ribosomal_L3"/>
    <property type="match status" value="1"/>
</dbReference>
<dbReference type="SUPFAM" id="SSF50447">
    <property type="entry name" value="Translation proteins"/>
    <property type="match status" value="1"/>
</dbReference>
<dbReference type="PROSITE" id="PS00474">
    <property type="entry name" value="RIBOSOMAL_L3"/>
    <property type="match status" value="1"/>
</dbReference>
<accession>Q0AUI0</accession>
<sequence>MTTKKKAIMGIKIGMTQIFDENDKAVPVSIIEAGPCTVLQKKKVESDGYESIQVGFYNLKEKLANKPARGHFKKANVKPLRYIKEFRIDNVDDYDVGQEITADIFTTGDLVDVIGTSKGKGFAGGVKRHNFARGSMGHGSKYHRRPGSLGAKGPARVFKGRKLPGRLGGERVTVQGLKVVKVYPDRNLILIKGSIPGPKRGFVIIKNSVKEK</sequence>
<name>RL3_SYNWW</name>
<comment type="function">
    <text evidence="1">One of the primary rRNA binding proteins, it binds directly near the 3'-end of the 23S rRNA, where it nucleates assembly of the 50S subunit.</text>
</comment>
<comment type="subunit">
    <text evidence="1">Part of the 50S ribosomal subunit. Forms a cluster with proteins L14 and L19.</text>
</comment>
<comment type="similarity">
    <text evidence="1">Belongs to the universal ribosomal protein uL3 family.</text>
</comment>
<evidence type="ECO:0000255" key="1">
    <source>
        <dbReference type="HAMAP-Rule" id="MF_01325"/>
    </source>
</evidence>
<evidence type="ECO:0000256" key="2">
    <source>
        <dbReference type="SAM" id="MobiDB-lite"/>
    </source>
</evidence>
<evidence type="ECO:0000305" key="3"/>
<protein>
    <recommendedName>
        <fullName evidence="1">Large ribosomal subunit protein uL3</fullName>
    </recommendedName>
    <alternativeName>
        <fullName evidence="3">50S ribosomal protein L3</fullName>
    </alternativeName>
</protein>
<proteinExistence type="inferred from homology"/>